<sequence>MYGHLSLSTLSLLAVVAAAPFPESWLQPRDSDVSQLFRRGAPDPKASDYLSYYPSPGSTPNVSTIPQAWLDKLATVQLPNVSVATANDGRPTYPNNENDGDSEICSFTDQCYVEDDLYSPPGEKVWALSFDDGPTDVSPALYDYLAQNNISSSATHFMIGGNIITSPQSVLIAIEAGGHLAVHTWSHPYMTTLTNEQVVAELGWTMQALSDLNGGRIPMYWRPPYGDVDNRVRAIAKGVFGLVTVLWDSDTNDWAISDQPDQYSVASVEAYFDTLVTGNRTQGLLLLEHELDNNTVEVFETEYPKAVANGWSVKNVADAFSMKWYLNSGKGNDDVVTTMSVAGTLTTAKPTHTSTSVASATATSSASVTDSAGVSIASAASSQESSSWPIANRPSLFVIACGLALAAIMV</sequence>
<evidence type="ECO:0000250" key="1"/>
<evidence type="ECO:0000250" key="2">
    <source>
        <dbReference type="UniProtKB" id="P82476"/>
    </source>
</evidence>
<evidence type="ECO:0000250" key="3">
    <source>
        <dbReference type="UniProtKB" id="Q6DWK3"/>
    </source>
</evidence>
<evidence type="ECO:0000255" key="4"/>
<evidence type="ECO:0000255" key="5">
    <source>
        <dbReference type="PROSITE-ProRule" id="PRU01014"/>
    </source>
</evidence>
<evidence type="ECO:0000305" key="6"/>
<protein>
    <recommendedName>
        <fullName evidence="6">Chitin deacetylase 3</fullName>
        <ecNumber evidence="2">3.5.1.41</ecNumber>
    </recommendedName>
</protein>
<gene>
    <name evidence="6" type="primary">CDA3</name>
    <name evidence="6" type="synonym">MP 84</name>
    <name type="ordered locus">CND03580</name>
</gene>
<dbReference type="EC" id="3.5.1.41" evidence="2"/>
<dbReference type="EMBL" id="AJ938050">
    <property type="protein sequence ID" value="CAI79614.1"/>
    <property type="molecule type" value="mRNA"/>
</dbReference>
<dbReference type="EMBL" id="AE017344">
    <property type="protein sequence ID" value="AAW42893.1"/>
    <property type="molecule type" value="Genomic_DNA"/>
</dbReference>
<dbReference type="RefSeq" id="XP_570200.1">
    <property type="nucleotide sequence ID" value="XM_570200.1"/>
</dbReference>
<dbReference type="SMR" id="P0CP76"/>
<dbReference type="STRING" id="214684.P0CP76"/>
<dbReference type="GlyCosmos" id="P0CP76">
    <property type="glycosylation" value="5 sites, No reported glycans"/>
</dbReference>
<dbReference type="PaxDb" id="214684-P0CP76"/>
<dbReference type="EnsemblFungi" id="AAW42893">
    <property type="protein sequence ID" value="AAW42893"/>
    <property type="gene ID" value="CND03580"/>
</dbReference>
<dbReference type="GeneID" id="3257267"/>
<dbReference type="KEGG" id="cne:CND03580"/>
<dbReference type="VEuPathDB" id="FungiDB:CND03580"/>
<dbReference type="eggNOG" id="ENOG502QZU8">
    <property type="taxonomic scope" value="Eukaryota"/>
</dbReference>
<dbReference type="HOGENOM" id="CLU_042090_2_0_1"/>
<dbReference type="InParanoid" id="P0CP76"/>
<dbReference type="OMA" id="GDIWDAP"/>
<dbReference type="OrthoDB" id="407355at2759"/>
<dbReference type="PHI-base" id="PHI:10438"/>
<dbReference type="Proteomes" id="UP000002149">
    <property type="component" value="Chromosome 4"/>
</dbReference>
<dbReference type="GO" id="GO:0005886">
    <property type="term" value="C:plasma membrane"/>
    <property type="evidence" value="ECO:0007669"/>
    <property type="project" value="UniProtKB-SubCell"/>
</dbReference>
<dbReference type="GO" id="GO:0098552">
    <property type="term" value="C:side of membrane"/>
    <property type="evidence" value="ECO:0007669"/>
    <property type="project" value="UniProtKB-KW"/>
</dbReference>
<dbReference type="GO" id="GO:0008061">
    <property type="term" value="F:chitin binding"/>
    <property type="evidence" value="ECO:0007669"/>
    <property type="project" value="UniProtKB-KW"/>
</dbReference>
<dbReference type="GO" id="GO:0004099">
    <property type="term" value="F:chitin deacetylase activity"/>
    <property type="evidence" value="ECO:0000318"/>
    <property type="project" value="GO_Central"/>
</dbReference>
<dbReference type="GO" id="GO:0046872">
    <property type="term" value="F:metal ion binding"/>
    <property type="evidence" value="ECO:0007669"/>
    <property type="project" value="UniProtKB-KW"/>
</dbReference>
<dbReference type="GO" id="GO:0071555">
    <property type="term" value="P:cell wall organization"/>
    <property type="evidence" value="ECO:0007669"/>
    <property type="project" value="UniProtKB-KW"/>
</dbReference>
<dbReference type="GO" id="GO:0006032">
    <property type="term" value="P:chitin catabolic process"/>
    <property type="evidence" value="ECO:0007669"/>
    <property type="project" value="UniProtKB-KW"/>
</dbReference>
<dbReference type="GO" id="GO:0009272">
    <property type="term" value="P:fungal-type cell wall biogenesis"/>
    <property type="evidence" value="ECO:0007669"/>
    <property type="project" value="UniProtKB-ARBA"/>
</dbReference>
<dbReference type="GO" id="GO:0000272">
    <property type="term" value="P:polysaccharide catabolic process"/>
    <property type="evidence" value="ECO:0007669"/>
    <property type="project" value="UniProtKB-KW"/>
</dbReference>
<dbReference type="CDD" id="cd10952">
    <property type="entry name" value="CE4_MrCDA_like"/>
    <property type="match status" value="1"/>
</dbReference>
<dbReference type="FunFam" id="3.20.20.370:FF:000009">
    <property type="entry name" value="Chitin deacetylase"/>
    <property type="match status" value="1"/>
</dbReference>
<dbReference type="Gene3D" id="3.20.20.370">
    <property type="entry name" value="Glycoside hydrolase/deacetylase"/>
    <property type="match status" value="1"/>
</dbReference>
<dbReference type="InterPro" id="IPR011330">
    <property type="entry name" value="Glyco_hydro/deAcase_b/a-brl"/>
</dbReference>
<dbReference type="InterPro" id="IPR002509">
    <property type="entry name" value="NODB_dom"/>
</dbReference>
<dbReference type="InterPro" id="IPR050248">
    <property type="entry name" value="Polysacc_deacetylase_ArnD"/>
</dbReference>
<dbReference type="PANTHER" id="PTHR10587:SF135">
    <property type="entry name" value="CHITIN DEACETYLASE 3"/>
    <property type="match status" value="1"/>
</dbReference>
<dbReference type="PANTHER" id="PTHR10587">
    <property type="entry name" value="GLYCOSYL TRANSFERASE-RELATED"/>
    <property type="match status" value="1"/>
</dbReference>
<dbReference type="Pfam" id="PF01522">
    <property type="entry name" value="Polysacc_deac_1"/>
    <property type="match status" value="1"/>
</dbReference>
<dbReference type="SUPFAM" id="SSF88713">
    <property type="entry name" value="Glycoside hydrolase/deacetylase"/>
    <property type="match status" value="1"/>
</dbReference>
<dbReference type="PROSITE" id="PS51677">
    <property type="entry name" value="NODB"/>
    <property type="match status" value="1"/>
</dbReference>
<comment type="function">
    <text evidence="2">Hydrolyzes the N-acetamido groups of N-acetyl-D-glucosamine residues in chitin to form chitosan and acetate (By similarity). Chitosan is required to anchor melanin to the cell wall, for maintenance of cell wall integrity, and for proper cytokinesis (By similarity). Chitosan offers an advantage during infection as it is less readily detected than chitin by host immunosurveillance mechanisms (By similarity).</text>
</comment>
<comment type="catalytic activity">
    <reaction evidence="2">
        <text>[(1-&gt;4)-N-acetyl-beta-D-glucosaminyl](n) + n H2O = chitosan + n acetate</text>
        <dbReference type="Rhea" id="RHEA:10464"/>
        <dbReference type="Rhea" id="RHEA-COMP:9593"/>
        <dbReference type="Rhea" id="RHEA-COMP:9597"/>
        <dbReference type="ChEBI" id="CHEBI:15377"/>
        <dbReference type="ChEBI" id="CHEBI:17029"/>
        <dbReference type="ChEBI" id="CHEBI:30089"/>
        <dbReference type="ChEBI" id="CHEBI:57704"/>
        <dbReference type="EC" id="3.5.1.41"/>
    </reaction>
    <physiologicalReaction direction="left-to-right" evidence="2">
        <dbReference type="Rhea" id="RHEA:10465"/>
    </physiologicalReaction>
</comment>
<comment type="cofactor">
    <cofactor evidence="3">
        <name>Co(2+)</name>
        <dbReference type="ChEBI" id="CHEBI:48828"/>
    </cofactor>
</comment>
<comment type="subcellular location">
    <subcellularLocation>
        <location evidence="4">Cell membrane</location>
        <topology evidence="4">Lipid-anchor</topology>
        <topology evidence="4">GPI-anchor</topology>
    </subcellularLocation>
</comment>
<comment type="similarity">
    <text evidence="6">Belongs to the polysaccharide deacetylase family.</text>
</comment>
<reference key="1">
    <citation type="journal article" date="2005" name="Infect. Immun.">
        <title>Characterization of two novel cryptococcal mannoproteins recognized by immune sera.</title>
        <authorList>
            <person name="Biondo C."/>
            <person name="Messina L."/>
            <person name="Bombaci M."/>
            <person name="Mancuso G."/>
            <person name="Midiri A."/>
            <person name="Beninati C."/>
            <person name="Cusumano V."/>
            <person name="Gerace E."/>
            <person name="Papasergi S."/>
            <person name="Teti G."/>
        </authorList>
    </citation>
    <scope>NUCLEOTIDE SEQUENCE [MRNA]</scope>
    <source>
        <strain>CAP 67</strain>
    </source>
</reference>
<reference key="2">
    <citation type="journal article" date="2005" name="Science">
        <title>The genome of the basidiomycetous yeast and human pathogen Cryptococcus neoformans.</title>
        <authorList>
            <person name="Loftus B.J."/>
            <person name="Fung E."/>
            <person name="Roncaglia P."/>
            <person name="Rowley D."/>
            <person name="Amedeo P."/>
            <person name="Bruno D."/>
            <person name="Vamathevan J."/>
            <person name="Miranda M."/>
            <person name="Anderson I.J."/>
            <person name="Fraser J.A."/>
            <person name="Allen J.E."/>
            <person name="Bosdet I.E."/>
            <person name="Brent M.R."/>
            <person name="Chiu R."/>
            <person name="Doering T.L."/>
            <person name="Donlin M.J."/>
            <person name="D'Souza C.A."/>
            <person name="Fox D.S."/>
            <person name="Grinberg V."/>
            <person name="Fu J."/>
            <person name="Fukushima M."/>
            <person name="Haas B.J."/>
            <person name="Huang J.C."/>
            <person name="Janbon G."/>
            <person name="Jones S.J.M."/>
            <person name="Koo H.L."/>
            <person name="Krzywinski M.I."/>
            <person name="Kwon-Chung K.J."/>
            <person name="Lengeler K.B."/>
            <person name="Maiti R."/>
            <person name="Marra M.A."/>
            <person name="Marra R.E."/>
            <person name="Mathewson C.A."/>
            <person name="Mitchell T.G."/>
            <person name="Pertea M."/>
            <person name="Riggs F.R."/>
            <person name="Salzberg S.L."/>
            <person name="Schein J.E."/>
            <person name="Shvartsbeyn A."/>
            <person name="Shin H."/>
            <person name="Shumway M."/>
            <person name="Specht C.A."/>
            <person name="Suh B.B."/>
            <person name="Tenney A."/>
            <person name="Utterback T.R."/>
            <person name="Wickes B.L."/>
            <person name="Wortman J.R."/>
            <person name="Wye N.H."/>
            <person name="Kronstad J.W."/>
            <person name="Lodge J.K."/>
            <person name="Heitman J."/>
            <person name="Davis R.W."/>
            <person name="Fraser C.M."/>
            <person name="Hyman R.W."/>
        </authorList>
    </citation>
    <scope>NUCLEOTIDE SEQUENCE [LARGE SCALE GENOMIC DNA]</scope>
    <source>
        <strain>JEC21 / ATCC MYA-565</strain>
    </source>
</reference>
<keyword id="KW-0119">Carbohydrate metabolism</keyword>
<keyword id="KW-1003">Cell membrane</keyword>
<keyword id="KW-0961">Cell wall biogenesis/degradation</keyword>
<keyword id="KW-0146">Chitin degradation</keyword>
<keyword id="KW-0147">Chitin-binding</keyword>
<keyword id="KW-0165">Cleavage on pair of basic residues</keyword>
<keyword id="KW-0170">Cobalt</keyword>
<keyword id="KW-0325">Glycoprotein</keyword>
<keyword id="KW-0336">GPI-anchor</keyword>
<keyword id="KW-0378">Hydrolase</keyword>
<keyword id="KW-0449">Lipoprotein</keyword>
<keyword id="KW-0472">Membrane</keyword>
<keyword id="KW-0479">Metal-binding</keyword>
<keyword id="KW-0624">Polysaccharide degradation</keyword>
<keyword id="KW-1185">Reference proteome</keyword>
<keyword id="KW-0732">Signal</keyword>
<name>CDA3_CRYNJ</name>
<feature type="signal peptide" evidence="4">
    <location>
        <begin position="1"/>
        <end position="18"/>
    </location>
</feature>
<feature type="propeptide" id="PRO_0000024828" evidence="1">
    <location>
        <begin position="19"/>
        <end position="39"/>
    </location>
</feature>
<feature type="chain" id="PRO_0000024829" description="Chitin deacetylase 3">
    <location>
        <begin position="40"/>
        <end position="385"/>
    </location>
</feature>
<feature type="propeptide" id="PRO_0000451829" description="Removed in mature form" evidence="4">
    <location>
        <begin position="386"/>
        <end position="410"/>
    </location>
</feature>
<feature type="domain" description="NodB homology" evidence="5">
    <location>
        <begin position="124"/>
        <end position="314"/>
    </location>
</feature>
<feature type="active site" description="Proton acceptor" evidence="5">
    <location>
        <position position="131"/>
    </location>
</feature>
<feature type="active site" description="Proton donor" evidence="5">
    <location>
        <position position="289"/>
    </location>
</feature>
<feature type="binding site" evidence="3">
    <location>
        <position position="131"/>
    </location>
    <ligand>
        <name>acetate</name>
        <dbReference type="ChEBI" id="CHEBI:30089"/>
    </ligand>
</feature>
<feature type="binding site" evidence="3">
    <location>
        <position position="132"/>
    </location>
    <ligand>
        <name>Co(2+)</name>
        <dbReference type="ChEBI" id="CHEBI:48828"/>
    </ligand>
</feature>
<feature type="binding site" evidence="3">
    <location>
        <position position="183"/>
    </location>
    <ligand>
        <name>Co(2+)</name>
        <dbReference type="ChEBI" id="CHEBI:48828"/>
    </ligand>
</feature>
<feature type="binding site" evidence="3">
    <location>
        <position position="187"/>
    </location>
    <ligand>
        <name>Co(2+)</name>
        <dbReference type="ChEBI" id="CHEBI:48828"/>
    </ligand>
</feature>
<feature type="binding site" evidence="3">
    <location>
        <position position="225"/>
    </location>
    <ligand>
        <name>acetate</name>
        <dbReference type="ChEBI" id="CHEBI:30089"/>
    </ligand>
</feature>
<feature type="lipid moiety-binding region" description="GPI-anchor amidated serine" evidence="4">
    <location>
        <position position="385"/>
    </location>
</feature>
<feature type="glycosylation site" description="N-linked (GlcNAc...) asparagine" evidence="4">
    <location>
        <position position="61"/>
    </location>
</feature>
<feature type="glycosylation site" description="N-linked (GlcNAc...) asparagine" evidence="4">
    <location>
        <position position="80"/>
    </location>
</feature>
<feature type="glycosylation site" description="N-linked (GlcNAc...) asparagine" evidence="4">
    <location>
        <position position="149"/>
    </location>
</feature>
<feature type="glycosylation site" description="N-linked (GlcNAc...) asparagine" evidence="4">
    <location>
        <position position="279"/>
    </location>
</feature>
<feature type="glycosylation site" description="N-linked (GlcNAc...) asparagine" evidence="4">
    <location>
        <position position="293"/>
    </location>
</feature>
<feature type="sequence variant" description="In strain: CAP 67.">
    <original>P</original>
    <variation>H</variation>
    <location>
        <position position="22"/>
    </location>
</feature>
<feature type="sequence variant" description="In strain: CAP 67.">
    <original>M</original>
    <variation>L</variation>
    <location>
        <position position="219"/>
    </location>
</feature>
<organism>
    <name type="scientific">Cryptococcus neoformans var. neoformans serotype D (strain JEC21 / ATCC MYA-565)</name>
    <name type="common">Filobasidiella neoformans</name>
    <dbReference type="NCBI Taxonomy" id="214684"/>
    <lineage>
        <taxon>Eukaryota</taxon>
        <taxon>Fungi</taxon>
        <taxon>Dikarya</taxon>
        <taxon>Basidiomycota</taxon>
        <taxon>Agaricomycotina</taxon>
        <taxon>Tremellomycetes</taxon>
        <taxon>Tremellales</taxon>
        <taxon>Cryptococcaceae</taxon>
        <taxon>Cryptococcus</taxon>
        <taxon>Cryptococcus neoformans species complex</taxon>
    </lineage>
</organism>
<accession>P0CP76</accession>
<accession>Q53I51</accession>
<accession>Q55U29</accession>
<accession>Q5KIB3</accession>
<proteinExistence type="evidence at transcript level"/>